<sequence length="372" mass="40627">MHNQAPIQRRKSTRIYVGNVPIGDGAPIAVQSMTNTRTTDVEATVNQIKALERVGADIVRVSVPTMDAAEAFKLIKQQVSVPLVADIHFDYRIALKVAEYGVDCLRINPGNIGNEERIRMVVDCARDKNIPIRIGVNAGSLEKDLQEKYGEPTPQALLESAMRHVDHLDRLNFDQFKVSVKASDVFLAVESYRLLAKQIDQPLHLGITEAGGARSGAVKSAIGLGLLLSEGIGDTLRVSLAADPVEEIKVGFDILKSLRIRARGINFIACPTCSRQEFDVIGTVNALEQRLEDIITPMDVSIIGCVVNGPGEALVSTLGVTGGNKKSGLYEDGVRKDRLDNDDMIAQLESRIRAKVSQLDEARRIDVLQVEK</sequence>
<keyword id="KW-0004">4Fe-4S</keyword>
<keyword id="KW-0408">Iron</keyword>
<keyword id="KW-0411">Iron-sulfur</keyword>
<keyword id="KW-0414">Isoprene biosynthesis</keyword>
<keyword id="KW-0479">Metal-binding</keyword>
<keyword id="KW-0560">Oxidoreductase</keyword>
<dbReference type="EC" id="1.17.7.3" evidence="1"/>
<dbReference type="EMBL" id="AL513382">
    <property type="protein sequence ID" value="CAD02726.1"/>
    <property type="molecule type" value="Genomic_DNA"/>
</dbReference>
<dbReference type="EMBL" id="AE014613">
    <property type="protein sequence ID" value="AAO68056.1"/>
    <property type="molecule type" value="Genomic_DNA"/>
</dbReference>
<dbReference type="RefSeq" id="NP_457055.1">
    <property type="nucleotide sequence ID" value="NC_003198.1"/>
</dbReference>
<dbReference type="RefSeq" id="WP_000551816.1">
    <property type="nucleotide sequence ID" value="NZ_WSUR01000007.1"/>
</dbReference>
<dbReference type="SMR" id="P58670"/>
<dbReference type="STRING" id="220341.gene:17586660"/>
<dbReference type="KEGG" id="stt:t0333"/>
<dbReference type="KEGG" id="sty:STY2768"/>
<dbReference type="PATRIC" id="fig|220341.7.peg.2810"/>
<dbReference type="eggNOG" id="COG0821">
    <property type="taxonomic scope" value="Bacteria"/>
</dbReference>
<dbReference type="HOGENOM" id="CLU_042258_0_0_6"/>
<dbReference type="OMA" id="PTCGRTQ"/>
<dbReference type="OrthoDB" id="9803214at2"/>
<dbReference type="UniPathway" id="UPA00056">
    <property type="reaction ID" value="UER00096"/>
</dbReference>
<dbReference type="Proteomes" id="UP000000541">
    <property type="component" value="Chromosome"/>
</dbReference>
<dbReference type="Proteomes" id="UP000002670">
    <property type="component" value="Chromosome"/>
</dbReference>
<dbReference type="GO" id="GO:0051539">
    <property type="term" value="F:4 iron, 4 sulfur cluster binding"/>
    <property type="evidence" value="ECO:0007669"/>
    <property type="project" value="UniProtKB-UniRule"/>
</dbReference>
<dbReference type="GO" id="GO:0046429">
    <property type="term" value="F:4-hydroxy-3-methylbut-2-en-1-yl diphosphate synthase activity (ferredoxin)"/>
    <property type="evidence" value="ECO:0007669"/>
    <property type="project" value="UniProtKB-UniRule"/>
</dbReference>
<dbReference type="GO" id="GO:0141197">
    <property type="term" value="F:4-hydroxy-3-methylbut-2-enyl-diphosphate synthase activity (flavodoxin)"/>
    <property type="evidence" value="ECO:0007669"/>
    <property type="project" value="UniProtKB-EC"/>
</dbReference>
<dbReference type="GO" id="GO:0005506">
    <property type="term" value="F:iron ion binding"/>
    <property type="evidence" value="ECO:0007669"/>
    <property type="project" value="InterPro"/>
</dbReference>
<dbReference type="GO" id="GO:0019288">
    <property type="term" value="P:isopentenyl diphosphate biosynthetic process, methylerythritol 4-phosphate pathway"/>
    <property type="evidence" value="ECO:0007669"/>
    <property type="project" value="UniProtKB-UniRule"/>
</dbReference>
<dbReference type="GO" id="GO:0016114">
    <property type="term" value="P:terpenoid biosynthetic process"/>
    <property type="evidence" value="ECO:0007669"/>
    <property type="project" value="InterPro"/>
</dbReference>
<dbReference type="FunFam" id="3.20.20.20:FF:000001">
    <property type="entry name" value="4-hydroxy-3-methylbut-2-en-1-yl diphosphate synthase (flavodoxin)"/>
    <property type="match status" value="1"/>
</dbReference>
<dbReference type="FunFam" id="3.30.413.10:FF:000002">
    <property type="entry name" value="4-hydroxy-3-methylbut-2-en-1-yl diphosphate synthase (flavodoxin)"/>
    <property type="match status" value="1"/>
</dbReference>
<dbReference type="Gene3D" id="3.20.20.20">
    <property type="entry name" value="Dihydropteroate synthase-like"/>
    <property type="match status" value="1"/>
</dbReference>
<dbReference type="Gene3D" id="3.30.413.10">
    <property type="entry name" value="Sulfite Reductase Hemoprotein, domain 1"/>
    <property type="match status" value="1"/>
</dbReference>
<dbReference type="HAMAP" id="MF_00159">
    <property type="entry name" value="IspG"/>
    <property type="match status" value="1"/>
</dbReference>
<dbReference type="InterPro" id="IPR011005">
    <property type="entry name" value="Dihydropteroate_synth-like_sf"/>
</dbReference>
<dbReference type="InterPro" id="IPR016425">
    <property type="entry name" value="IspG_bac"/>
</dbReference>
<dbReference type="InterPro" id="IPR004588">
    <property type="entry name" value="IspG_bac-typ"/>
</dbReference>
<dbReference type="InterPro" id="IPR045854">
    <property type="entry name" value="NO2/SO3_Rdtase_4Fe4S_sf"/>
</dbReference>
<dbReference type="NCBIfam" id="TIGR00612">
    <property type="entry name" value="ispG_gcpE"/>
    <property type="match status" value="1"/>
</dbReference>
<dbReference type="NCBIfam" id="NF001540">
    <property type="entry name" value="PRK00366.1"/>
    <property type="match status" value="1"/>
</dbReference>
<dbReference type="PANTHER" id="PTHR30454">
    <property type="entry name" value="4-HYDROXY-3-METHYLBUT-2-EN-1-YL DIPHOSPHATE SYNTHASE"/>
    <property type="match status" value="1"/>
</dbReference>
<dbReference type="PANTHER" id="PTHR30454:SF0">
    <property type="entry name" value="4-HYDROXY-3-METHYLBUT-2-EN-1-YL DIPHOSPHATE SYNTHASE (FERREDOXIN), CHLOROPLASTIC"/>
    <property type="match status" value="1"/>
</dbReference>
<dbReference type="Pfam" id="PF04551">
    <property type="entry name" value="GcpE"/>
    <property type="match status" value="1"/>
</dbReference>
<dbReference type="PIRSF" id="PIRSF004640">
    <property type="entry name" value="IspG"/>
    <property type="match status" value="1"/>
</dbReference>
<dbReference type="SUPFAM" id="SSF51717">
    <property type="entry name" value="Dihydropteroate synthetase-like"/>
    <property type="match status" value="1"/>
</dbReference>
<dbReference type="SUPFAM" id="SSF56014">
    <property type="entry name" value="Nitrite and sulphite reductase 4Fe-4S domain-like"/>
    <property type="match status" value="1"/>
</dbReference>
<comment type="function">
    <text evidence="1">Converts 2C-methyl-D-erythritol 2,4-cyclodiphosphate (ME-2,4cPP) into 1-hydroxy-2-methyl-2-(E)-butenyl 4-diphosphate.</text>
</comment>
<comment type="catalytic activity">
    <reaction evidence="1">
        <text>(2E)-4-hydroxy-3-methylbut-2-enyl diphosphate + oxidized [flavodoxin] + H2O + 2 H(+) = 2-C-methyl-D-erythritol 2,4-cyclic diphosphate + reduced [flavodoxin]</text>
        <dbReference type="Rhea" id="RHEA:43604"/>
        <dbReference type="Rhea" id="RHEA-COMP:10622"/>
        <dbReference type="Rhea" id="RHEA-COMP:10623"/>
        <dbReference type="ChEBI" id="CHEBI:15377"/>
        <dbReference type="ChEBI" id="CHEBI:15378"/>
        <dbReference type="ChEBI" id="CHEBI:57618"/>
        <dbReference type="ChEBI" id="CHEBI:58210"/>
        <dbReference type="ChEBI" id="CHEBI:58483"/>
        <dbReference type="ChEBI" id="CHEBI:128753"/>
        <dbReference type="EC" id="1.17.7.3"/>
    </reaction>
</comment>
<comment type="cofactor">
    <cofactor evidence="1">
        <name>[4Fe-4S] cluster</name>
        <dbReference type="ChEBI" id="CHEBI:49883"/>
    </cofactor>
    <text evidence="1">Binds 1 [4Fe-4S] cluster.</text>
</comment>
<comment type="pathway">
    <text evidence="1">Isoprenoid biosynthesis; isopentenyl diphosphate biosynthesis via DXP pathway; isopentenyl diphosphate from 1-deoxy-D-xylulose 5-phosphate: step 5/6.</text>
</comment>
<comment type="similarity">
    <text evidence="1">Belongs to the IspG family.</text>
</comment>
<proteinExistence type="inferred from homology"/>
<accession>P58670</accession>
<organism>
    <name type="scientific">Salmonella typhi</name>
    <dbReference type="NCBI Taxonomy" id="90370"/>
    <lineage>
        <taxon>Bacteria</taxon>
        <taxon>Pseudomonadati</taxon>
        <taxon>Pseudomonadota</taxon>
        <taxon>Gammaproteobacteria</taxon>
        <taxon>Enterobacterales</taxon>
        <taxon>Enterobacteriaceae</taxon>
        <taxon>Salmonella</taxon>
    </lineage>
</organism>
<name>ISPG_SALTI</name>
<reference key="1">
    <citation type="journal article" date="2001" name="Nature">
        <title>Complete genome sequence of a multiple drug resistant Salmonella enterica serovar Typhi CT18.</title>
        <authorList>
            <person name="Parkhill J."/>
            <person name="Dougan G."/>
            <person name="James K.D."/>
            <person name="Thomson N.R."/>
            <person name="Pickard D."/>
            <person name="Wain J."/>
            <person name="Churcher C.M."/>
            <person name="Mungall K.L."/>
            <person name="Bentley S.D."/>
            <person name="Holden M.T.G."/>
            <person name="Sebaihia M."/>
            <person name="Baker S."/>
            <person name="Basham D."/>
            <person name="Brooks K."/>
            <person name="Chillingworth T."/>
            <person name="Connerton P."/>
            <person name="Cronin A."/>
            <person name="Davis P."/>
            <person name="Davies R.M."/>
            <person name="Dowd L."/>
            <person name="White N."/>
            <person name="Farrar J."/>
            <person name="Feltwell T."/>
            <person name="Hamlin N."/>
            <person name="Haque A."/>
            <person name="Hien T.T."/>
            <person name="Holroyd S."/>
            <person name="Jagels K."/>
            <person name="Krogh A."/>
            <person name="Larsen T.S."/>
            <person name="Leather S."/>
            <person name="Moule S."/>
            <person name="O'Gaora P."/>
            <person name="Parry C."/>
            <person name="Quail M.A."/>
            <person name="Rutherford K.M."/>
            <person name="Simmonds M."/>
            <person name="Skelton J."/>
            <person name="Stevens K."/>
            <person name="Whitehead S."/>
            <person name="Barrell B.G."/>
        </authorList>
    </citation>
    <scope>NUCLEOTIDE SEQUENCE [LARGE SCALE GENOMIC DNA]</scope>
    <source>
        <strain>CT18</strain>
    </source>
</reference>
<reference key="2">
    <citation type="journal article" date="2003" name="J. Bacteriol.">
        <title>Comparative genomics of Salmonella enterica serovar Typhi strains Ty2 and CT18.</title>
        <authorList>
            <person name="Deng W."/>
            <person name="Liou S.-R."/>
            <person name="Plunkett G. III"/>
            <person name="Mayhew G.F."/>
            <person name="Rose D.J."/>
            <person name="Burland V."/>
            <person name="Kodoyianni V."/>
            <person name="Schwartz D.C."/>
            <person name="Blattner F.R."/>
        </authorList>
    </citation>
    <scope>NUCLEOTIDE SEQUENCE [LARGE SCALE GENOMIC DNA]</scope>
    <source>
        <strain>ATCC 700931 / Ty2</strain>
    </source>
</reference>
<gene>
    <name evidence="1" type="primary">ispG</name>
    <name type="synonym">gcpE</name>
    <name type="ordered locus">STY2768</name>
    <name type="ordered locus">t0333</name>
</gene>
<evidence type="ECO:0000255" key="1">
    <source>
        <dbReference type="HAMAP-Rule" id="MF_00159"/>
    </source>
</evidence>
<feature type="chain" id="PRO_0000190628" description="4-hydroxy-3-methylbut-2-en-1-yl diphosphate synthase (flavodoxin)">
    <location>
        <begin position="1"/>
        <end position="372"/>
    </location>
</feature>
<feature type="binding site" evidence="1">
    <location>
        <position position="270"/>
    </location>
    <ligand>
        <name>[4Fe-4S] cluster</name>
        <dbReference type="ChEBI" id="CHEBI:49883"/>
    </ligand>
</feature>
<feature type="binding site" evidence="1">
    <location>
        <position position="273"/>
    </location>
    <ligand>
        <name>[4Fe-4S] cluster</name>
        <dbReference type="ChEBI" id="CHEBI:49883"/>
    </ligand>
</feature>
<feature type="binding site" evidence="1">
    <location>
        <position position="305"/>
    </location>
    <ligand>
        <name>[4Fe-4S] cluster</name>
        <dbReference type="ChEBI" id="CHEBI:49883"/>
    </ligand>
</feature>
<feature type="binding site" evidence="1">
    <location>
        <position position="312"/>
    </location>
    <ligand>
        <name>[4Fe-4S] cluster</name>
        <dbReference type="ChEBI" id="CHEBI:49883"/>
    </ligand>
</feature>
<protein>
    <recommendedName>
        <fullName evidence="1">4-hydroxy-3-methylbut-2-en-1-yl diphosphate synthase (flavodoxin)</fullName>
        <ecNumber evidence="1">1.17.7.3</ecNumber>
    </recommendedName>
    <alternativeName>
        <fullName evidence="1">1-hydroxy-2-methyl-2-(E)-butenyl 4-diphosphate synthase</fullName>
    </alternativeName>
</protein>